<keyword id="KW-0963">Cytoplasm</keyword>
<keyword id="KW-0235">DNA replication</keyword>
<keyword id="KW-0236">DNA replication inhibitor</keyword>
<keyword id="KW-0479">Metal-binding</keyword>
<keyword id="KW-1185">Reference proteome</keyword>
<keyword id="KW-0862">Zinc</keyword>
<evidence type="ECO:0000255" key="1">
    <source>
        <dbReference type="HAMAP-Rule" id="MF_01159"/>
    </source>
</evidence>
<evidence type="ECO:0000256" key="2">
    <source>
        <dbReference type="SAM" id="MobiDB-lite"/>
    </source>
</evidence>
<accession>Q65PI8</accession>
<accession>Q62ZX7</accession>
<name>YABA_BACLD</name>
<sequence length="120" mass="13996">MDKKELFDTVISLEEQIGSLYRQLGDLKQHIGEMIEENNHLQLENEHLRKRLEETDQRLKSVKSDEKEIKAEKTGHADIGEGHDNLARLYQEGFHICNIHYGSVRKEGDCLFCLSFLNKK</sequence>
<comment type="function">
    <text evidence="1">Involved in control of chromosome replication initiation. Inhibits the cooperative binding of DnaA to the oriC region, thus negatively regulating initiation of chromosome replication. Inhibits the ability of DnaA-ATP to form a helix on DNA; does not disassemble preformed DnaA-DNA helices. Decreases the residence time of DnaA on the chromosome at its binding sites (oriC, replication forks and promoter-binding sites). Tethers DnaA to the replication machinery via the DNA polymerase beta sliding clamp subunit (dnaN). Associates with oriC and other DnaA targets on the chromosome in a DnaA-dependent manner.</text>
</comment>
<comment type="cofactor">
    <cofactor evidence="1">
        <name>Zn(2+)</name>
        <dbReference type="ChEBI" id="CHEBI:29105"/>
    </cofactor>
    <text evidence="1">Binds 1 zinc ion per subunit.</text>
</comment>
<comment type="subunit">
    <text evidence="1">Homotetramer. Interacts with both DnaA and DnaN, acting as a bridge between these two proteins.</text>
</comment>
<comment type="subcellular location">
    <subcellularLocation>
        <location evidence="1">Cytoplasm</location>
        <location evidence="1">Nucleoid</location>
    </subcellularLocation>
    <text evidence="1">Localizes in tight foci, which correspond to the replisome at mid-cell throughout the cell cycle.</text>
</comment>
<comment type="similarity">
    <text evidence="1">Belongs to the YabA family.</text>
</comment>
<reference key="1">
    <citation type="journal article" date="2004" name="J. Mol. Microbiol. Biotechnol.">
        <title>The complete genome sequence of Bacillus licheniformis DSM13, an organism with great industrial potential.</title>
        <authorList>
            <person name="Veith B."/>
            <person name="Herzberg C."/>
            <person name="Steckel S."/>
            <person name="Feesche J."/>
            <person name="Maurer K.H."/>
            <person name="Ehrenreich P."/>
            <person name="Baeumer S."/>
            <person name="Henne A."/>
            <person name="Liesegang H."/>
            <person name="Merkl R."/>
            <person name="Ehrenreich A."/>
            <person name="Gottschalk G."/>
        </authorList>
    </citation>
    <scope>NUCLEOTIDE SEQUENCE [LARGE SCALE GENOMIC DNA]</scope>
    <source>
        <strain>ATCC 14580 / DSM 13 / JCM 2505 / CCUG 7422 / NBRC 12200 / NCIMB 9375 / NCTC 10341 / NRRL NRS-1264 / Gibson 46</strain>
    </source>
</reference>
<reference key="2">
    <citation type="journal article" date="2004" name="Genome Biol.">
        <title>Complete genome sequence of the industrial bacterium Bacillus licheniformis and comparisons with closely related Bacillus species.</title>
        <authorList>
            <person name="Rey M.W."/>
            <person name="Ramaiya P."/>
            <person name="Nelson B.A."/>
            <person name="Brody-Karpin S.D."/>
            <person name="Zaretsky E.J."/>
            <person name="Tang M."/>
            <person name="Lopez de Leon A."/>
            <person name="Xiang H."/>
            <person name="Gusti V."/>
            <person name="Clausen I.G."/>
            <person name="Olsen P.B."/>
            <person name="Rasmussen M.D."/>
            <person name="Andersen J.T."/>
            <person name="Joergensen P.L."/>
            <person name="Larsen T.S."/>
            <person name="Sorokin A."/>
            <person name="Bolotin A."/>
            <person name="Lapidus A."/>
            <person name="Galleron N."/>
            <person name="Ehrlich S.D."/>
            <person name="Berka R.M."/>
        </authorList>
    </citation>
    <scope>NUCLEOTIDE SEQUENCE [LARGE SCALE GENOMIC DNA]</scope>
    <source>
        <strain>ATCC 14580 / DSM 13 / JCM 2505 / CCUG 7422 / NBRC 12200 / NCIMB 9375 / NCTC 10341 / NRRL NRS-1264 / Gibson 46</strain>
    </source>
</reference>
<protein>
    <recommendedName>
        <fullName evidence="1">Replication initiation control protein YabA</fullName>
    </recommendedName>
</protein>
<organism>
    <name type="scientific">Bacillus licheniformis (strain ATCC 14580 / DSM 13 / JCM 2505 / CCUG 7422 / NBRC 12200 / NCIMB 9375 / NCTC 10341 / NRRL NRS-1264 / Gibson 46)</name>
    <dbReference type="NCBI Taxonomy" id="279010"/>
    <lineage>
        <taxon>Bacteria</taxon>
        <taxon>Bacillati</taxon>
        <taxon>Bacillota</taxon>
        <taxon>Bacilli</taxon>
        <taxon>Bacillales</taxon>
        <taxon>Bacillaceae</taxon>
        <taxon>Bacillus</taxon>
    </lineage>
</organism>
<dbReference type="EMBL" id="AE017333">
    <property type="protein sequence ID" value="AAU39026.1"/>
    <property type="molecule type" value="Genomic_DNA"/>
</dbReference>
<dbReference type="EMBL" id="CP000002">
    <property type="protein sequence ID" value="AAU21681.1"/>
    <property type="molecule type" value="Genomic_DNA"/>
</dbReference>
<dbReference type="RefSeq" id="WP_003178164.1">
    <property type="nucleotide sequence ID" value="NC_006322.1"/>
</dbReference>
<dbReference type="SMR" id="Q65PI8"/>
<dbReference type="STRING" id="279010.BL00538"/>
<dbReference type="GeneID" id="92859002"/>
<dbReference type="KEGG" id="bld:BLi00046"/>
<dbReference type="KEGG" id="bli:BL00538"/>
<dbReference type="eggNOG" id="COG4467">
    <property type="taxonomic scope" value="Bacteria"/>
</dbReference>
<dbReference type="HOGENOM" id="CLU_157169_0_0_9"/>
<dbReference type="Proteomes" id="UP000000606">
    <property type="component" value="Chromosome"/>
</dbReference>
<dbReference type="GO" id="GO:0009295">
    <property type="term" value="C:nucleoid"/>
    <property type="evidence" value="ECO:0007669"/>
    <property type="project" value="UniProtKB-SubCell"/>
</dbReference>
<dbReference type="GO" id="GO:0006260">
    <property type="term" value="P:DNA replication"/>
    <property type="evidence" value="ECO:0007669"/>
    <property type="project" value="UniProtKB-UniRule"/>
</dbReference>
<dbReference type="Gene3D" id="1.20.5.1700">
    <property type="match status" value="1"/>
</dbReference>
<dbReference type="HAMAP" id="MF_01159">
    <property type="entry name" value="YabA"/>
    <property type="match status" value="1"/>
</dbReference>
<dbReference type="InterPro" id="IPR010377">
    <property type="entry name" value="YabA"/>
</dbReference>
<dbReference type="NCBIfam" id="NF009644">
    <property type="entry name" value="PRK13169.1-5"/>
    <property type="match status" value="1"/>
</dbReference>
<dbReference type="Pfam" id="PF06156">
    <property type="entry name" value="YabA"/>
    <property type="match status" value="1"/>
</dbReference>
<dbReference type="PIRSF" id="PIRSF021439">
    <property type="entry name" value="DUF972"/>
    <property type="match status" value="1"/>
</dbReference>
<feature type="chain" id="PRO_0000211904" description="Replication initiation control protein YabA">
    <location>
        <begin position="1"/>
        <end position="120"/>
    </location>
</feature>
<feature type="region of interest" description="Disordered" evidence="2">
    <location>
        <begin position="57"/>
        <end position="77"/>
    </location>
</feature>
<feature type="binding site" evidence="1">
    <location>
        <position position="95"/>
    </location>
    <ligand>
        <name>Zn(2+)</name>
        <dbReference type="ChEBI" id="CHEBI:29105"/>
    </ligand>
</feature>
<feature type="binding site" evidence="1">
    <location>
        <position position="97"/>
    </location>
    <ligand>
        <name>Zn(2+)</name>
        <dbReference type="ChEBI" id="CHEBI:29105"/>
    </ligand>
</feature>
<feature type="binding site" evidence="1">
    <location>
        <position position="110"/>
    </location>
    <ligand>
        <name>Zn(2+)</name>
        <dbReference type="ChEBI" id="CHEBI:29105"/>
    </ligand>
</feature>
<feature type="binding site" evidence="1">
    <location>
        <position position="113"/>
    </location>
    <ligand>
        <name>Zn(2+)</name>
        <dbReference type="ChEBI" id="CHEBI:29105"/>
    </ligand>
</feature>
<proteinExistence type="inferred from homology"/>
<gene>
    <name evidence="1" type="primary">yabA</name>
    <name type="ordered locus">BLi00046</name>
    <name type="ordered locus">BL00538</name>
</gene>